<accession>Q3ANM4</accession>
<organism>
    <name type="scientific">Synechococcus sp. (strain CC9605)</name>
    <dbReference type="NCBI Taxonomy" id="110662"/>
    <lineage>
        <taxon>Bacteria</taxon>
        <taxon>Bacillati</taxon>
        <taxon>Cyanobacteriota</taxon>
        <taxon>Cyanophyceae</taxon>
        <taxon>Synechococcales</taxon>
        <taxon>Synechococcaceae</taxon>
        <taxon>Synechococcus</taxon>
    </lineage>
</organism>
<sequence length="469" mass="50559">MPRLLDRQTPVHFIGVGGIGMSALARILVDRGHSVSGSDPRDNATTQQLKTLGVKVFRQQDATCIDAVTGRTAADSPVVVISTAIPESNPELQRARQQGLEIWHRSDLLAALIEQQPSIAVAGSHGKTTTSTLITTLLLEADQDPTAVIGGIVPSLGSNGHSGQGKLLVAEADESDGSLVKFSPSLGVITNLELDHTDHYSCLDDLISTLQRFAGGCDRVLANHDCPILQEHFQPTAWWSNQSDESVDFAALPLSLDGDRCVARFYEAGQPVGDFTLPMAGLHNLSNATGALAACRMEGLPFNQLVEGLAGLKAPGRRFDLRGTWKGRHIVDDYAHHPSEVQATLEMARLMVRSGRSPLPSAPQRLLAVFQPHRYSRTRQFLDGFAKALQNCDLLLLAPVYPAGEQPLQGISSNALADRVRKLKPDLEIAVAENLDQLTELVIQHSLENDLVLAMGAGDVNGLWSRLTS</sequence>
<feature type="chain" id="PRO_0000242606" description="UDP-N-acetylmuramate--L-alanine ligase">
    <location>
        <begin position="1"/>
        <end position="469"/>
    </location>
</feature>
<feature type="binding site" evidence="1">
    <location>
        <begin position="123"/>
        <end position="129"/>
    </location>
    <ligand>
        <name>ATP</name>
        <dbReference type="ChEBI" id="CHEBI:30616"/>
    </ligand>
</feature>
<keyword id="KW-0067">ATP-binding</keyword>
<keyword id="KW-0131">Cell cycle</keyword>
<keyword id="KW-0132">Cell division</keyword>
<keyword id="KW-0133">Cell shape</keyword>
<keyword id="KW-0961">Cell wall biogenesis/degradation</keyword>
<keyword id="KW-0963">Cytoplasm</keyword>
<keyword id="KW-0436">Ligase</keyword>
<keyword id="KW-0547">Nucleotide-binding</keyword>
<keyword id="KW-0573">Peptidoglycan synthesis</keyword>
<gene>
    <name evidence="1" type="primary">murC</name>
    <name type="ordered locus">Syncc9605_0029</name>
</gene>
<name>MURC_SYNSC</name>
<dbReference type="EC" id="6.3.2.8" evidence="1"/>
<dbReference type="EMBL" id="CP000110">
    <property type="protein sequence ID" value="ABB33808.1"/>
    <property type="molecule type" value="Genomic_DNA"/>
</dbReference>
<dbReference type="RefSeq" id="WP_011363070.1">
    <property type="nucleotide sequence ID" value="NC_007516.1"/>
</dbReference>
<dbReference type="SMR" id="Q3ANM4"/>
<dbReference type="STRING" id="110662.Syncc9605_0029"/>
<dbReference type="KEGG" id="syd:Syncc9605_0029"/>
<dbReference type="eggNOG" id="COG0773">
    <property type="taxonomic scope" value="Bacteria"/>
</dbReference>
<dbReference type="HOGENOM" id="CLU_028104_2_2_3"/>
<dbReference type="OrthoDB" id="9804126at2"/>
<dbReference type="UniPathway" id="UPA00219"/>
<dbReference type="GO" id="GO:0005737">
    <property type="term" value="C:cytoplasm"/>
    <property type="evidence" value="ECO:0007669"/>
    <property type="project" value="UniProtKB-SubCell"/>
</dbReference>
<dbReference type="GO" id="GO:0005524">
    <property type="term" value="F:ATP binding"/>
    <property type="evidence" value="ECO:0007669"/>
    <property type="project" value="UniProtKB-UniRule"/>
</dbReference>
<dbReference type="GO" id="GO:0008763">
    <property type="term" value="F:UDP-N-acetylmuramate-L-alanine ligase activity"/>
    <property type="evidence" value="ECO:0007669"/>
    <property type="project" value="UniProtKB-UniRule"/>
</dbReference>
<dbReference type="GO" id="GO:0051301">
    <property type="term" value="P:cell division"/>
    <property type="evidence" value="ECO:0007669"/>
    <property type="project" value="UniProtKB-KW"/>
</dbReference>
<dbReference type="GO" id="GO:0071555">
    <property type="term" value="P:cell wall organization"/>
    <property type="evidence" value="ECO:0007669"/>
    <property type="project" value="UniProtKB-KW"/>
</dbReference>
<dbReference type="GO" id="GO:0009252">
    <property type="term" value="P:peptidoglycan biosynthetic process"/>
    <property type="evidence" value="ECO:0007669"/>
    <property type="project" value="UniProtKB-UniRule"/>
</dbReference>
<dbReference type="GO" id="GO:0008360">
    <property type="term" value="P:regulation of cell shape"/>
    <property type="evidence" value="ECO:0007669"/>
    <property type="project" value="UniProtKB-KW"/>
</dbReference>
<dbReference type="Gene3D" id="3.90.190.20">
    <property type="entry name" value="Mur ligase, C-terminal domain"/>
    <property type="match status" value="1"/>
</dbReference>
<dbReference type="Gene3D" id="3.40.1190.10">
    <property type="entry name" value="Mur-like, catalytic domain"/>
    <property type="match status" value="1"/>
</dbReference>
<dbReference type="Gene3D" id="3.40.50.720">
    <property type="entry name" value="NAD(P)-binding Rossmann-like Domain"/>
    <property type="match status" value="1"/>
</dbReference>
<dbReference type="HAMAP" id="MF_00046">
    <property type="entry name" value="MurC"/>
    <property type="match status" value="1"/>
</dbReference>
<dbReference type="InterPro" id="IPR036565">
    <property type="entry name" value="Mur-like_cat_sf"/>
</dbReference>
<dbReference type="InterPro" id="IPR004101">
    <property type="entry name" value="Mur_ligase_C"/>
</dbReference>
<dbReference type="InterPro" id="IPR036615">
    <property type="entry name" value="Mur_ligase_C_dom_sf"/>
</dbReference>
<dbReference type="InterPro" id="IPR013221">
    <property type="entry name" value="Mur_ligase_cen"/>
</dbReference>
<dbReference type="InterPro" id="IPR000713">
    <property type="entry name" value="Mur_ligase_N"/>
</dbReference>
<dbReference type="InterPro" id="IPR050061">
    <property type="entry name" value="MurCDEF_pg_biosynth"/>
</dbReference>
<dbReference type="InterPro" id="IPR005758">
    <property type="entry name" value="UDP-N-AcMur_Ala_ligase_MurC"/>
</dbReference>
<dbReference type="NCBIfam" id="TIGR01082">
    <property type="entry name" value="murC"/>
    <property type="match status" value="1"/>
</dbReference>
<dbReference type="PANTHER" id="PTHR43445:SF3">
    <property type="entry name" value="UDP-N-ACETYLMURAMATE--L-ALANINE LIGASE"/>
    <property type="match status" value="1"/>
</dbReference>
<dbReference type="PANTHER" id="PTHR43445">
    <property type="entry name" value="UDP-N-ACETYLMURAMATE--L-ALANINE LIGASE-RELATED"/>
    <property type="match status" value="1"/>
</dbReference>
<dbReference type="Pfam" id="PF01225">
    <property type="entry name" value="Mur_ligase"/>
    <property type="match status" value="1"/>
</dbReference>
<dbReference type="Pfam" id="PF02875">
    <property type="entry name" value="Mur_ligase_C"/>
    <property type="match status" value="1"/>
</dbReference>
<dbReference type="Pfam" id="PF08245">
    <property type="entry name" value="Mur_ligase_M"/>
    <property type="match status" value="1"/>
</dbReference>
<dbReference type="SUPFAM" id="SSF51984">
    <property type="entry name" value="MurCD N-terminal domain"/>
    <property type="match status" value="1"/>
</dbReference>
<dbReference type="SUPFAM" id="SSF53623">
    <property type="entry name" value="MurD-like peptide ligases, catalytic domain"/>
    <property type="match status" value="1"/>
</dbReference>
<dbReference type="SUPFAM" id="SSF53244">
    <property type="entry name" value="MurD-like peptide ligases, peptide-binding domain"/>
    <property type="match status" value="1"/>
</dbReference>
<comment type="function">
    <text evidence="1">Cell wall formation.</text>
</comment>
<comment type="catalytic activity">
    <reaction evidence="1">
        <text>UDP-N-acetyl-alpha-D-muramate + L-alanine + ATP = UDP-N-acetyl-alpha-D-muramoyl-L-alanine + ADP + phosphate + H(+)</text>
        <dbReference type="Rhea" id="RHEA:23372"/>
        <dbReference type="ChEBI" id="CHEBI:15378"/>
        <dbReference type="ChEBI" id="CHEBI:30616"/>
        <dbReference type="ChEBI" id="CHEBI:43474"/>
        <dbReference type="ChEBI" id="CHEBI:57972"/>
        <dbReference type="ChEBI" id="CHEBI:70757"/>
        <dbReference type="ChEBI" id="CHEBI:83898"/>
        <dbReference type="ChEBI" id="CHEBI:456216"/>
        <dbReference type="EC" id="6.3.2.8"/>
    </reaction>
</comment>
<comment type="pathway">
    <text evidence="1">Cell wall biogenesis; peptidoglycan biosynthesis.</text>
</comment>
<comment type="subcellular location">
    <subcellularLocation>
        <location evidence="1">Cytoplasm</location>
    </subcellularLocation>
</comment>
<comment type="similarity">
    <text evidence="1">Belongs to the MurCDEF family.</text>
</comment>
<protein>
    <recommendedName>
        <fullName evidence="1">UDP-N-acetylmuramate--L-alanine ligase</fullName>
        <ecNumber evidence="1">6.3.2.8</ecNumber>
    </recommendedName>
    <alternativeName>
        <fullName evidence="1">UDP-N-acetylmuramoyl-L-alanine synthetase</fullName>
    </alternativeName>
</protein>
<reference key="1">
    <citation type="submission" date="2005-07" db="EMBL/GenBank/DDBJ databases">
        <title>Complete sequence of Synechococcus sp. CC9605.</title>
        <authorList>
            <consortium name="US DOE Joint Genome Institute"/>
            <person name="Copeland A."/>
            <person name="Lucas S."/>
            <person name="Lapidus A."/>
            <person name="Barry K."/>
            <person name="Detter J.C."/>
            <person name="Glavina T."/>
            <person name="Hammon N."/>
            <person name="Israni S."/>
            <person name="Pitluck S."/>
            <person name="Schmutz J."/>
            <person name="Martinez M."/>
            <person name="Larimer F."/>
            <person name="Land M."/>
            <person name="Kyrpides N."/>
            <person name="Ivanova N."/>
            <person name="Richardson P."/>
        </authorList>
    </citation>
    <scope>NUCLEOTIDE SEQUENCE [LARGE SCALE GENOMIC DNA]</scope>
    <source>
        <strain>CC9605</strain>
    </source>
</reference>
<proteinExistence type="inferred from homology"/>
<evidence type="ECO:0000255" key="1">
    <source>
        <dbReference type="HAMAP-Rule" id="MF_00046"/>
    </source>
</evidence>